<comment type="function">
    <text evidence="1">Involved in control of chromosome replication initiation. Inhibits the cooperative binding of DnaA to the oriC region, thus negatively regulating initiation of chromosome replication. Inhibits the ability of DnaA-ATP to form a helix on DNA; does not disassemble preformed DnaA-DNA helices. Decreases the residence time of DnaA on the chromosome at its binding sites (oriC, replication forks and promoter-binding sites). Tethers DnaA to the replication machinery via the DNA polymerase beta sliding clamp subunit (dnaN). Associates with oriC and other DnaA targets on the chromosome in a DnaA-dependent manner.</text>
</comment>
<comment type="cofactor">
    <cofactor evidence="1">
        <name>Zn(2+)</name>
        <dbReference type="ChEBI" id="CHEBI:29105"/>
    </cofactor>
    <text evidence="1">Binds 1 zinc ion per subunit.</text>
</comment>
<comment type="subunit">
    <text evidence="1">Homotetramer. Interacts with both DnaA and DnaN, acting as a bridge between these two proteins.</text>
</comment>
<comment type="subcellular location">
    <subcellularLocation>
        <location evidence="1">Cytoplasm</location>
        <location evidence="1">Nucleoid</location>
    </subcellularLocation>
    <text evidence="1">Localizes in tight foci, which correspond to the replisome at mid-cell throughout the cell cycle.</text>
</comment>
<comment type="similarity">
    <text evidence="1">Belongs to the YabA family.</text>
</comment>
<evidence type="ECO:0000255" key="1">
    <source>
        <dbReference type="HAMAP-Rule" id="MF_01159"/>
    </source>
</evidence>
<protein>
    <recommendedName>
        <fullName evidence="1">Replication initiation control protein YabA</fullName>
    </recommendedName>
</protein>
<name>YABA_ENTFA</name>
<accession>Q830M0</accession>
<keyword id="KW-0963">Cytoplasm</keyword>
<keyword id="KW-0235">DNA replication</keyword>
<keyword id="KW-0236">DNA replication inhibitor</keyword>
<keyword id="KW-0479">Metal-binding</keyword>
<keyword id="KW-1185">Reference proteome</keyword>
<keyword id="KW-0862">Zinc</keyword>
<organism>
    <name type="scientific">Enterococcus faecalis (strain ATCC 700802 / V583)</name>
    <dbReference type="NCBI Taxonomy" id="226185"/>
    <lineage>
        <taxon>Bacteria</taxon>
        <taxon>Bacillati</taxon>
        <taxon>Bacillota</taxon>
        <taxon>Bacilli</taxon>
        <taxon>Lactobacillales</taxon>
        <taxon>Enterococcaceae</taxon>
        <taxon>Enterococcus</taxon>
    </lineage>
</organism>
<sequence>MDKRSLYDGLNSLETDLDSSVTQLREIKAALHELVEKNTTLEIENQRLREHLQELNKLAGNTTETEKQELSKSRMNLEKLYEEGFHVCNILYGSRRENDEECAFCLDVIYGERTR</sequence>
<dbReference type="EMBL" id="AE016830">
    <property type="protein sequence ID" value="AAO82458.1"/>
    <property type="molecule type" value="Genomic_DNA"/>
</dbReference>
<dbReference type="RefSeq" id="NP_816388.1">
    <property type="nucleotide sequence ID" value="NC_004668.1"/>
</dbReference>
<dbReference type="RefSeq" id="WP_002356372.1">
    <property type="nucleotide sequence ID" value="NZ_KE136528.1"/>
</dbReference>
<dbReference type="SMR" id="Q830M0"/>
<dbReference type="STRING" id="226185.EF_2760"/>
<dbReference type="DNASU" id="1201610"/>
<dbReference type="EnsemblBacteria" id="AAO82458">
    <property type="protein sequence ID" value="AAO82458"/>
    <property type="gene ID" value="EF_2760"/>
</dbReference>
<dbReference type="KEGG" id="efa:EF2760"/>
<dbReference type="PATRIC" id="fig|226185.45.peg.809"/>
<dbReference type="eggNOG" id="COG4467">
    <property type="taxonomic scope" value="Bacteria"/>
</dbReference>
<dbReference type="HOGENOM" id="CLU_157169_0_0_9"/>
<dbReference type="Proteomes" id="UP000001415">
    <property type="component" value="Chromosome"/>
</dbReference>
<dbReference type="GO" id="GO:0009295">
    <property type="term" value="C:nucleoid"/>
    <property type="evidence" value="ECO:0007669"/>
    <property type="project" value="UniProtKB-SubCell"/>
</dbReference>
<dbReference type="GO" id="GO:0006260">
    <property type="term" value="P:DNA replication"/>
    <property type="evidence" value="ECO:0007669"/>
    <property type="project" value="UniProtKB-UniRule"/>
</dbReference>
<dbReference type="HAMAP" id="MF_01159">
    <property type="entry name" value="YabA"/>
    <property type="match status" value="1"/>
</dbReference>
<dbReference type="InterPro" id="IPR010377">
    <property type="entry name" value="YabA"/>
</dbReference>
<dbReference type="Pfam" id="PF06156">
    <property type="entry name" value="YabA"/>
    <property type="match status" value="1"/>
</dbReference>
<dbReference type="PIRSF" id="PIRSF021439">
    <property type="entry name" value="DUF972"/>
    <property type="match status" value="1"/>
</dbReference>
<reference key="1">
    <citation type="journal article" date="2003" name="Science">
        <title>Role of mobile DNA in the evolution of vancomycin-resistant Enterococcus faecalis.</title>
        <authorList>
            <person name="Paulsen I.T."/>
            <person name="Banerjei L."/>
            <person name="Myers G.S.A."/>
            <person name="Nelson K.E."/>
            <person name="Seshadri R."/>
            <person name="Read T.D."/>
            <person name="Fouts D.E."/>
            <person name="Eisen J.A."/>
            <person name="Gill S.R."/>
            <person name="Heidelberg J.F."/>
            <person name="Tettelin H."/>
            <person name="Dodson R.J."/>
            <person name="Umayam L.A."/>
            <person name="Brinkac L.M."/>
            <person name="Beanan M.J."/>
            <person name="Daugherty S.C."/>
            <person name="DeBoy R.T."/>
            <person name="Durkin S.A."/>
            <person name="Kolonay J.F."/>
            <person name="Madupu R."/>
            <person name="Nelson W.C."/>
            <person name="Vamathevan J.J."/>
            <person name="Tran B."/>
            <person name="Upton J."/>
            <person name="Hansen T."/>
            <person name="Shetty J."/>
            <person name="Khouri H.M."/>
            <person name="Utterback T.R."/>
            <person name="Radune D."/>
            <person name="Ketchum K.A."/>
            <person name="Dougherty B.A."/>
            <person name="Fraser C.M."/>
        </authorList>
    </citation>
    <scope>NUCLEOTIDE SEQUENCE [LARGE SCALE GENOMIC DNA]</scope>
    <source>
        <strain>ATCC 700802 / V583</strain>
    </source>
</reference>
<gene>
    <name evidence="1" type="primary">yabA</name>
    <name type="ordered locus">EF_2760</name>
</gene>
<proteinExistence type="inferred from homology"/>
<feature type="chain" id="PRO_0000211907" description="Replication initiation control protein YabA">
    <location>
        <begin position="1"/>
        <end position="115"/>
    </location>
</feature>
<feature type="binding site" evidence="1">
    <location>
        <position position="86"/>
    </location>
    <ligand>
        <name>Zn(2+)</name>
        <dbReference type="ChEBI" id="CHEBI:29105"/>
    </ligand>
</feature>
<feature type="binding site" evidence="1">
    <location>
        <position position="88"/>
    </location>
    <ligand>
        <name>Zn(2+)</name>
        <dbReference type="ChEBI" id="CHEBI:29105"/>
    </ligand>
</feature>
<feature type="binding site" evidence="1">
    <location>
        <position position="102"/>
    </location>
    <ligand>
        <name>Zn(2+)</name>
        <dbReference type="ChEBI" id="CHEBI:29105"/>
    </ligand>
</feature>
<feature type="binding site" evidence="1">
    <location>
        <position position="105"/>
    </location>
    <ligand>
        <name>Zn(2+)</name>
        <dbReference type="ChEBI" id="CHEBI:29105"/>
    </ligand>
</feature>